<keyword id="KW-0963">Cytoplasm</keyword>
<keyword id="KW-0251">Elongation factor</keyword>
<keyword id="KW-0379">Hydroxylation</keyword>
<keyword id="KW-0648">Protein biosynthesis</keyword>
<keyword id="KW-1185">Reference proteome</keyword>
<organism>
    <name type="scientific">Shigella dysenteriae serotype 1 (strain Sd197)</name>
    <dbReference type="NCBI Taxonomy" id="300267"/>
    <lineage>
        <taxon>Bacteria</taxon>
        <taxon>Pseudomonadati</taxon>
        <taxon>Pseudomonadota</taxon>
        <taxon>Gammaproteobacteria</taxon>
        <taxon>Enterobacterales</taxon>
        <taxon>Enterobacteriaceae</taxon>
        <taxon>Shigella</taxon>
    </lineage>
</organism>
<gene>
    <name evidence="1" type="primary">efp</name>
    <name type="ordered locus">SDY_4390</name>
</gene>
<protein>
    <recommendedName>
        <fullName evidence="1">Elongation factor P</fullName>
        <shortName evidence="1">EF-P</shortName>
    </recommendedName>
</protein>
<accession>Q328H8</accession>
<comment type="function">
    <text evidence="1">Involved in peptide bond synthesis. Alleviates ribosome stalling that occurs when 3 or more consecutive Pro residues or the sequence PPG is present in a protein, possibly by augmenting the peptidyl transferase activity of the ribosome. Modification of Lys-34 is required for alleviation.</text>
</comment>
<comment type="pathway">
    <text evidence="1">Protein biosynthesis; polypeptide chain elongation.</text>
</comment>
<comment type="subcellular location">
    <subcellularLocation>
        <location evidence="1">Cytoplasm</location>
    </subcellularLocation>
</comment>
<comment type="PTM">
    <text evidence="1">Is beta-lysylated on the epsilon-amino group of Lys-34 by the combined action of EpmA and EpmB, and then hydroxylated on the C5 position of the same residue by EpmC. Lysylation is critical for the stimulatory effect of EF-P on peptide-bond formation. The lysylation moiety would extend toward the peptidyltransferase center and stabilize the terminal 3-CCA end of the tRNA. The hydroxylation of the C5 position on Lys-34 would allow additional potential stabilizing hydrogen-bond interactions with the P-tRNA.</text>
</comment>
<comment type="similarity">
    <text evidence="1">Belongs to the elongation factor P family.</text>
</comment>
<reference key="1">
    <citation type="journal article" date="2005" name="Nucleic Acids Res.">
        <title>Genome dynamics and diversity of Shigella species, the etiologic agents of bacillary dysentery.</title>
        <authorList>
            <person name="Yang F."/>
            <person name="Yang J."/>
            <person name="Zhang X."/>
            <person name="Chen L."/>
            <person name="Jiang Y."/>
            <person name="Yan Y."/>
            <person name="Tang X."/>
            <person name="Wang J."/>
            <person name="Xiong Z."/>
            <person name="Dong J."/>
            <person name="Xue Y."/>
            <person name="Zhu Y."/>
            <person name="Xu X."/>
            <person name="Sun L."/>
            <person name="Chen S."/>
            <person name="Nie H."/>
            <person name="Peng J."/>
            <person name="Xu J."/>
            <person name="Wang Y."/>
            <person name="Yuan Z."/>
            <person name="Wen Y."/>
            <person name="Yao Z."/>
            <person name="Shen Y."/>
            <person name="Qiang B."/>
            <person name="Hou Y."/>
            <person name="Yu J."/>
            <person name="Jin Q."/>
        </authorList>
    </citation>
    <scope>NUCLEOTIDE SEQUENCE [LARGE SCALE GENOMIC DNA]</scope>
    <source>
        <strain>Sd197</strain>
    </source>
</reference>
<feature type="chain" id="PRO_1000010856" description="Elongation factor P">
    <location>
        <begin position="1"/>
        <end position="188"/>
    </location>
</feature>
<feature type="modified residue" description="N6-(3,6-diaminohexanoyl)-5-hydroxylysine" evidence="1">
    <location>
        <position position="34"/>
    </location>
</feature>
<proteinExistence type="inferred from homology"/>
<evidence type="ECO:0000255" key="1">
    <source>
        <dbReference type="HAMAP-Rule" id="MF_00141"/>
    </source>
</evidence>
<dbReference type="EMBL" id="CP000034">
    <property type="protein sequence ID" value="ABB64277.1"/>
    <property type="molecule type" value="Genomic_DNA"/>
</dbReference>
<dbReference type="RefSeq" id="WP_000257278.1">
    <property type="nucleotide sequence ID" value="NC_007606.1"/>
</dbReference>
<dbReference type="RefSeq" id="YP_405768.1">
    <property type="nucleotide sequence ID" value="NC_007606.1"/>
</dbReference>
<dbReference type="SMR" id="Q328H8"/>
<dbReference type="STRING" id="300267.SDY_4390"/>
<dbReference type="EnsemblBacteria" id="ABB64277">
    <property type="protein sequence ID" value="ABB64277"/>
    <property type="gene ID" value="SDY_4390"/>
</dbReference>
<dbReference type="GeneID" id="93777677"/>
<dbReference type="KEGG" id="sdy:SDY_4390"/>
<dbReference type="PATRIC" id="fig|300267.13.peg.5185"/>
<dbReference type="HOGENOM" id="CLU_074944_0_0_6"/>
<dbReference type="UniPathway" id="UPA00345"/>
<dbReference type="Proteomes" id="UP000002716">
    <property type="component" value="Chromosome"/>
</dbReference>
<dbReference type="GO" id="GO:0005829">
    <property type="term" value="C:cytosol"/>
    <property type="evidence" value="ECO:0007669"/>
    <property type="project" value="UniProtKB-ARBA"/>
</dbReference>
<dbReference type="GO" id="GO:0003746">
    <property type="term" value="F:translation elongation factor activity"/>
    <property type="evidence" value="ECO:0007669"/>
    <property type="project" value="UniProtKB-UniRule"/>
</dbReference>
<dbReference type="GO" id="GO:0043043">
    <property type="term" value="P:peptide biosynthetic process"/>
    <property type="evidence" value="ECO:0007669"/>
    <property type="project" value="InterPro"/>
</dbReference>
<dbReference type="CDD" id="cd04470">
    <property type="entry name" value="S1_EF-P_repeat_1"/>
    <property type="match status" value="1"/>
</dbReference>
<dbReference type="CDD" id="cd05794">
    <property type="entry name" value="S1_EF-P_repeat_2"/>
    <property type="match status" value="1"/>
</dbReference>
<dbReference type="FunFam" id="2.30.30.30:FF:000003">
    <property type="entry name" value="Elongation factor P"/>
    <property type="match status" value="1"/>
</dbReference>
<dbReference type="FunFam" id="2.40.50.140:FF:000004">
    <property type="entry name" value="Elongation factor P"/>
    <property type="match status" value="1"/>
</dbReference>
<dbReference type="FunFam" id="2.40.50.140:FF:000009">
    <property type="entry name" value="Elongation factor P"/>
    <property type="match status" value="1"/>
</dbReference>
<dbReference type="Gene3D" id="2.30.30.30">
    <property type="match status" value="1"/>
</dbReference>
<dbReference type="Gene3D" id="2.40.50.140">
    <property type="entry name" value="Nucleic acid-binding proteins"/>
    <property type="match status" value="2"/>
</dbReference>
<dbReference type="HAMAP" id="MF_00141">
    <property type="entry name" value="EF_P"/>
    <property type="match status" value="1"/>
</dbReference>
<dbReference type="InterPro" id="IPR015365">
    <property type="entry name" value="Elong-fact-P_C"/>
</dbReference>
<dbReference type="InterPro" id="IPR012340">
    <property type="entry name" value="NA-bd_OB-fold"/>
</dbReference>
<dbReference type="InterPro" id="IPR014722">
    <property type="entry name" value="Rib_uL2_dom2"/>
</dbReference>
<dbReference type="InterPro" id="IPR020599">
    <property type="entry name" value="Transl_elong_fac_P/YeiP"/>
</dbReference>
<dbReference type="InterPro" id="IPR013185">
    <property type="entry name" value="Transl_elong_KOW-like"/>
</dbReference>
<dbReference type="InterPro" id="IPR001059">
    <property type="entry name" value="Transl_elong_P/YeiP_cen"/>
</dbReference>
<dbReference type="InterPro" id="IPR013852">
    <property type="entry name" value="Transl_elong_P/YeiP_CS"/>
</dbReference>
<dbReference type="InterPro" id="IPR011768">
    <property type="entry name" value="Transl_elongation_fac_P"/>
</dbReference>
<dbReference type="InterPro" id="IPR008991">
    <property type="entry name" value="Translation_prot_SH3-like_sf"/>
</dbReference>
<dbReference type="NCBIfam" id="TIGR00038">
    <property type="entry name" value="efp"/>
    <property type="match status" value="1"/>
</dbReference>
<dbReference type="NCBIfam" id="NF001810">
    <property type="entry name" value="PRK00529.1"/>
    <property type="match status" value="1"/>
</dbReference>
<dbReference type="PANTHER" id="PTHR30053">
    <property type="entry name" value="ELONGATION FACTOR P"/>
    <property type="match status" value="1"/>
</dbReference>
<dbReference type="PANTHER" id="PTHR30053:SF12">
    <property type="entry name" value="ELONGATION FACTOR P (EF-P) FAMILY PROTEIN"/>
    <property type="match status" value="1"/>
</dbReference>
<dbReference type="Pfam" id="PF01132">
    <property type="entry name" value="EFP"/>
    <property type="match status" value="1"/>
</dbReference>
<dbReference type="Pfam" id="PF08207">
    <property type="entry name" value="EFP_N"/>
    <property type="match status" value="1"/>
</dbReference>
<dbReference type="Pfam" id="PF09285">
    <property type="entry name" value="Elong-fact-P_C"/>
    <property type="match status" value="1"/>
</dbReference>
<dbReference type="PIRSF" id="PIRSF005901">
    <property type="entry name" value="EF-P"/>
    <property type="match status" value="1"/>
</dbReference>
<dbReference type="SMART" id="SM01185">
    <property type="entry name" value="EFP"/>
    <property type="match status" value="1"/>
</dbReference>
<dbReference type="SMART" id="SM00841">
    <property type="entry name" value="Elong-fact-P_C"/>
    <property type="match status" value="1"/>
</dbReference>
<dbReference type="SUPFAM" id="SSF50249">
    <property type="entry name" value="Nucleic acid-binding proteins"/>
    <property type="match status" value="2"/>
</dbReference>
<dbReference type="SUPFAM" id="SSF50104">
    <property type="entry name" value="Translation proteins SH3-like domain"/>
    <property type="match status" value="1"/>
</dbReference>
<dbReference type="PROSITE" id="PS01275">
    <property type="entry name" value="EFP"/>
    <property type="match status" value="1"/>
</dbReference>
<name>EFP_SHIDS</name>
<sequence length="188" mass="20591">MATYYSNDFRAGLKIMLDGEPYAVEASEFVKPGKGQAFARVKLRRLLTGTRVEKTFKSTDSAEGADVVDMNLTYLYNDGEFWHFMNNETFEQLSADAKAIGDNAKWLLDQAECIVTLWNGQPISVTPPNFVELEIVDTDPGLKGDTAGTGGKPATLSTGAVVKVPLFVQIGEVIKVDTRSGEYVSRVK</sequence>